<proteinExistence type="evidence at protein level"/>
<feature type="chain" id="PRO_0000200029" description="Gastrin/cholecystokinin-like peptide">
    <location>
        <begin position="1"/>
        <end position="52"/>
    </location>
</feature>
<name>ANTR_TRASC</name>
<accession>P80110</accession>
<keyword id="KW-0222">Digestion</keyword>
<keyword id="KW-0903">Direct protein sequencing</keyword>
<keyword id="KW-0372">Hormone</keyword>
<keyword id="KW-0964">Secreted</keyword>
<evidence type="ECO:0000305" key="1"/>
<protein>
    <recommendedName>
        <fullName>Gastrin/cholecystokinin-like peptide</fullName>
    </recommendedName>
    <alternativeName>
        <fullName>Antral peptide</fullName>
    </alternativeName>
</protein>
<reference key="1">
    <citation type="journal article" date="1992" name="Eur. J. Biochem.">
        <title>Identification of cholecystokinin/gastrin peptides in frog and turtle. Evidence that cholecystokinin is phylogenetically older than gastrin.</title>
        <authorList>
            <person name="Johnsen A.H."/>
            <person name="Rehfeld J.F."/>
        </authorList>
    </citation>
    <scope>PROTEIN SEQUENCE</scope>
    <source>
        <tissue>Gastric mucosa</tissue>
    </source>
</reference>
<organism>
    <name type="scientific">Trachemys scripta</name>
    <name type="common">Red-eared slider turtle</name>
    <name type="synonym">Pseudemys scripta</name>
    <dbReference type="NCBI Taxonomy" id="34903"/>
    <lineage>
        <taxon>Eukaryota</taxon>
        <taxon>Metazoa</taxon>
        <taxon>Chordata</taxon>
        <taxon>Craniata</taxon>
        <taxon>Vertebrata</taxon>
        <taxon>Euteleostomi</taxon>
        <taxon>Archelosauria</taxon>
        <taxon>Testudinata</taxon>
        <taxon>Testudines</taxon>
        <taxon>Cryptodira</taxon>
        <taxon>Durocryptodira</taxon>
        <taxon>Testudinoidea</taxon>
        <taxon>Emydidae</taxon>
        <taxon>Trachemys</taxon>
    </lineage>
</organism>
<sequence length="52" mass="6133">DLLEALSQDQKLLMAKFLPHIYAELANREGNWHEDAALRPLHDHDYPGWMDF</sequence>
<dbReference type="PIR" id="S24143">
    <property type="entry name" value="S24143"/>
</dbReference>
<dbReference type="SMR" id="P80110"/>
<dbReference type="GO" id="GO:0005576">
    <property type="term" value="C:extracellular region"/>
    <property type="evidence" value="ECO:0007669"/>
    <property type="project" value="UniProtKB-SubCell"/>
</dbReference>
<dbReference type="GO" id="GO:0005179">
    <property type="term" value="F:hormone activity"/>
    <property type="evidence" value="ECO:0007669"/>
    <property type="project" value="UniProtKB-KW"/>
</dbReference>
<dbReference type="GO" id="GO:0007586">
    <property type="term" value="P:digestion"/>
    <property type="evidence" value="ECO:0007669"/>
    <property type="project" value="UniProtKB-KW"/>
</dbReference>
<dbReference type="InterPro" id="IPR013152">
    <property type="entry name" value="Gastrin/cholecystokinin_CS"/>
</dbReference>
<dbReference type="PROSITE" id="PS00259">
    <property type="entry name" value="GASTRIN"/>
    <property type="match status" value="1"/>
</dbReference>
<comment type="function">
    <text>May control digestion processes.</text>
</comment>
<comment type="subcellular location">
    <subcellularLocation>
        <location>Secreted</location>
    </subcellularLocation>
</comment>
<comment type="similarity">
    <text evidence="1">Belongs to the gastrin/cholecystokinin family.</text>
</comment>